<evidence type="ECO:0000255" key="1">
    <source>
        <dbReference type="HAMAP-Rule" id="MF_00279"/>
    </source>
</evidence>
<comment type="function">
    <text evidence="1">Catalyzes the complicated ring closure reaction between the two acyclic compounds 1-deoxy-D-xylulose-5-phosphate (DXP) and 3-amino-2-oxopropyl phosphate (1-amino-acetone-3-phosphate or AAP) to form pyridoxine 5'-phosphate (PNP) and inorganic phosphate.</text>
</comment>
<comment type="catalytic activity">
    <reaction evidence="1">
        <text>3-amino-2-oxopropyl phosphate + 1-deoxy-D-xylulose 5-phosphate = pyridoxine 5'-phosphate + phosphate + 2 H2O + H(+)</text>
        <dbReference type="Rhea" id="RHEA:15265"/>
        <dbReference type="ChEBI" id="CHEBI:15377"/>
        <dbReference type="ChEBI" id="CHEBI:15378"/>
        <dbReference type="ChEBI" id="CHEBI:43474"/>
        <dbReference type="ChEBI" id="CHEBI:57279"/>
        <dbReference type="ChEBI" id="CHEBI:57792"/>
        <dbReference type="ChEBI" id="CHEBI:58589"/>
        <dbReference type="EC" id="2.6.99.2"/>
    </reaction>
</comment>
<comment type="pathway">
    <text evidence="1">Cofactor biosynthesis; pyridoxine 5'-phosphate biosynthesis; pyridoxine 5'-phosphate from D-erythrose 4-phosphate: step 5/5.</text>
</comment>
<comment type="subunit">
    <text evidence="1">Homooctamer; tetramer of dimers.</text>
</comment>
<comment type="subcellular location">
    <subcellularLocation>
        <location evidence="1">Cytoplasm</location>
    </subcellularLocation>
</comment>
<comment type="similarity">
    <text evidence="1">Belongs to the PNP synthase family.</text>
</comment>
<name>PDXJ_GEOSM</name>
<sequence>MARLGVNIDHVATLRQARGGTEPDPVAAAAIAEFAGADGITIHLREDRRHIQDRDLKILRQTVQTRLNLEMAATDEMVAIALSVKPEACTLVPEKRAELTTEGGLDVRIHQEALKLAIEKLQAGGIIVSLFIDPDPDQIKVANKIGADYIEIHTGSFAEAKSWKEEELELIKIENAVKLARKLDLGVNAGHGLNYNNVKKVAAIGGIEEFNIGHSIMSRAILVGLDRAVRDMSELVRYA</sequence>
<keyword id="KW-0963">Cytoplasm</keyword>
<keyword id="KW-0664">Pyridoxine biosynthesis</keyword>
<keyword id="KW-0808">Transferase</keyword>
<reference key="1">
    <citation type="submission" date="2009-07" db="EMBL/GenBank/DDBJ databases">
        <title>Complete sequence of Geobacter sp. M21.</title>
        <authorList>
            <consortium name="US DOE Joint Genome Institute"/>
            <person name="Lucas S."/>
            <person name="Copeland A."/>
            <person name="Lapidus A."/>
            <person name="Glavina del Rio T."/>
            <person name="Dalin E."/>
            <person name="Tice H."/>
            <person name="Bruce D."/>
            <person name="Goodwin L."/>
            <person name="Pitluck S."/>
            <person name="Saunders E."/>
            <person name="Brettin T."/>
            <person name="Detter J.C."/>
            <person name="Han C."/>
            <person name="Larimer F."/>
            <person name="Land M."/>
            <person name="Hauser L."/>
            <person name="Kyrpides N."/>
            <person name="Ovchinnikova G."/>
            <person name="Lovley D."/>
        </authorList>
    </citation>
    <scope>NUCLEOTIDE SEQUENCE [LARGE SCALE GENOMIC DNA]</scope>
    <source>
        <strain>M21</strain>
    </source>
</reference>
<gene>
    <name evidence="1" type="primary">pdxJ</name>
    <name type="ordered locus">GM21_1600</name>
</gene>
<protein>
    <recommendedName>
        <fullName evidence="1">Pyridoxine 5'-phosphate synthase</fullName>
        <shortName evidence="1">PNP synthase</shortName>
        <ecNumber evidence="1">2.6.99.2</ecNumber>
    </recommendedName>
</protein>
<feature type="chain" id="PRO_1000204809" description="Pyridoxine 5'-phosphate synthase">
    <location>
        <begin position="1"/>
        <end position="239"/>
    </location>
</feature>
<feature type="active site" description="Proton acceptor" evidence="1">
    <location>
        <position position="43"/>
    </location>
</feature>
<feature type="active site" description="Proton acceptor" evidence="1">
    <location>
        <position position="70"/>
    </location>
</feature>
<feature type="active site" description="Proton donor" evidence="1">
    <location>
        <position position="191"/>
    </location>
</feature>
<feature type="binding site" evidence="1">
    <location>
        <position position="7"/>
    </location>
    <ligand>
        <name>3-amino-2-oxopropyl phosphate</name>
        <dbReference type="ChEBI" id="CHEBI:57279"/>
    </ligand>
</feature>
<feature type="binding site" evidence="1">
    <location>
        <begin position="9"/>
        <end position="10"/>
    </location>
    <ligand>
        <name>1-deoxy-D-xylulose 5-phosphate</name>
        <dbReference type="ChEBI" id="CHEBI:57792"/>
    </ligand>
</feature>
<feature type="binding site" evidence="1">
    <location>
        <position position="18"/>
    </location>
    <ligand>
        <name>3-amino-2-oxopropyl phosphate</name>
        <dbReference type="ChEBI" id="CHEBI:57279"/>
    </ligand>
</feature>
<feature type="binding site" evidence="1">
    <location>
        <position position="45"/>
    </location>
    <ligand>
        <name>1-deoxy-D-xylulose 5-phosphate</name>
        <dbReference type="ChEBI" id="CHEBI:57792"/>
    </ligand>
</feature>
<feature type="binding site" evidence="1">
    <location>
        <position position="50"/>
    </location>
    <ligand>
        <name>1-deoxy-D-xylulose 5-phosphate</name>
        <dbReference type="ChEBI" id="CHEBI:57792"/>
    </ligand>
</feature>
<feature type="binding site" evidence="1">
    <location>
        <position position="100"/>
    </location>
    <ligand>
        <name>1-deoxy-D-xylulose 5-phosphate</name>
        <dbReference type="ChEBI" id="CHEBI:57792"/>
    </ligand>
</feature>
<feature type="binding site" evidence="1">
    <location>
        <position position="192"/>
    </location>
    <ligand>
        <name>3-amino-2-oxopropyl phosphate</name>
        <dbReference type="ChEBI" id="CHEBI:57279"/>
    </ligand>
</feature>
<feature type="binding site" evidence="1">
    <location>
        <begin position="213"/>
        <end position="214"/>
    </location>
    <ligand>
        <name>3-amino-2-oxopropyl phosphate</name>
        <dbReference type="ChEBI" id="CHEBI:57279"/>
    </ligand>
</feature>
<feature type="site" description="Transition state stabilizer" evidence="1">
    <location>
        <position position="151"/>
    </location>
</feature>
<accession>C6E5P6</accession>
<dbReference type="EC" id="2.6.99.2" evidence="1"/>
<dbReference type="EMBL" id="CP001661">
    <property type="protein sequence ID" value="ACT17655.1"/>
    <property type="molecule type" value="Genomic_DNA"/>
</dbReference>
<dbReference type="SMR" id="C6E5P6"/>
<dbReference type="STRING" id="443144.GM21_1600"/>
<dbReference type="KEGG" id="gem:GM21_1600"/>
<dbReference type="eggNOG" id="COG0854">
    <property type="taxonomic scope" value="Bacteria"/>
</dbReference>
<dbReference type="HOGENOM" id="CLU_074563_0_0_7"/>
<dbReference type="OrthoDB" id="9806590at2"/>
<dbReference type="UniPathway" id="UPA00244">
    <property type="reaction ID" value="UER00313"/>
</dbReference>
<dbReference type="GO" id="GO:0005829">
    <property type="term" value="C:cytosol"/>
    <property type="evidence" value="ECO:0007669"/>
    <property type="project" value="TreeGrafter"/>
</dbReference>
<dbReference type="GO" id="GO:0033856">
    <property type="term" value="F:pyridoxine 5'-phosphate synthase activity"/>
    <property type="evidence" value="ECO:0007669"/>
    <property type="project" value="UniProtKB-EC"/>
</dbReference>
<dbReference type="GO" id="GO:0008615">
    <property type="term" value="P:pyridoxine biosynthetic process"/>
    <property type="evidence" value="ECO:0007669"/>
    <property type="project" value="UniProtKB-UniRule"/>
</dbReference>
<dbReference type="CDD" id="cd00003">
    <property type="entry name" value="PNPsynthase"/>
    <property type="match status" value="1"/>
</dbReference>
<dbReference type="Gene3D" id="3.20.20.70">
    <property type="entry name" value="Aldolase class I"/>
    <property type="match status" value="1"/>
</dbReference>
<dbReference type="HAMAP" id="MF_00279">
    <property type="entry name" value="PdxJ"/>
    <property type="match status" value="1"/>
</dbReference>
<dbReference type="InterPro" id="IPR013785">
    <property type="entry name" value="Aldolase_TIM"/>
</dbReference>
<dbReference type="InterPro" id="IPR004569">
    <property type="entry name" value="PyrdxlP_synth_PdxJ"/>
</dbReference>
<dbReference type="InterPro" id="IPR036130">
    <property type="entry name" value="Pyridoxine-5'_phos_synth"/>
</dbReference>
<dbReference type="NCBIfam" id="TIGR00559">
    <property type="entry name" value="pdxJ"/>
    <property type="match status" value="1"/>
</dbReference>
<dbReference type="NCBIfam" id="NF003623">
    <property type="entry name" value="PRK05265.1-1"/>
    <property type="match status" value="1"/>
</dbReference>
<dbReference type="NCBIfam" id="NF003625">
    <property type="entry name" value="PRK05265.1-3"/>
    <property type="match status" value="1"/>
</dbReference>
<dbReference type="NCBIfam" id="NF003627">
    <property type="entry name" value="PRK05265.1-5"/>
    <property type="match status" value="1"/>
</dbReference>
<dbReference type="PANTHER" id="PTHR30456">
    <property type="entry name" value="PYRIDOXINE 5'-PHOSPHATE SYNTHASE"/>
    <property type="match status" value="1"/>
</dbReference>
<dbReference type="PANTHER" id="PTHR30456:SF0">
    <property type="entry name" value="PYRIDOXINE 5'-PHOSPHATE SYNTHASE"/>
    <property type="match status" value="1"/>
</dbReference>
<dbReference type="Pfam" id="PF03740">
    <property type="entry name" value="PdxJ"/>
    <property type="match status" value="1"/>
</dbReference>
<dbReference type="SUPFAM" id="SSF63892">
    <property type="entry name" value="Pyridoxine 5'-phosphate synthase"/>
    <property type="match status" value="1"/>
</dbReference>
<organism>
    <name type="scientific">Geobacter sp. (strain M21)</name>
    <dbReference type="NCBI Taxonomy" id="443144"/>
    <lineage>
        <taxon>Bacteria</taxon>
        <taxon>Pseudomonadati</taxon>
        <taxon>Thermodesulfobacteriota</taxon>
        <taxon>Desulfuromonadia</taxon>
        <taxon>Geobacterales</taxon>
        <taxon>Geobacteraceae</taxon>
        <taxon>Geobacter</taxon>
    </lineage>
</organism>
<proteinExistence type="inferred from homology"/>